<proteinExistence type="evidence at transcript level"/>
<evidence type="ECO:0000305" key="1"/>
<gene>
    <name type="primary">M</name>
</gene>
<keyword id="KW-0261">Viral envelope protein</keyword>
<keyword id="KW-0468">Viral matrix protein</keyword>
<keyword id="KW-0946">Virion</keyword>
<sequence>MSITNSAIYTFPESSFSENGHIEPLPLKVNEQRKAVPHIRVAKIGNPPKHGSRYLDVFLLGFFEMERIKDKYGSVNDLDSDPGYKVCGSGSLPIGLAKYTGNDQELLQAATKLDIEVRRTVKAKEMIVYTVQNIKPELYPWSSRLRKGMLFDANKVALAPQCLPLDRSIKFRVIFVNCTAIGSITLFKIPKSMASLSLPSTISINLQVHIKTGVQTDSKGIVQILDEKGEKSLNFMVHLGLIKRKVGRMYSVEYCKQKIEKMRLIFSLGLVGGISLHVNATGSISKTLASQLVFKREICYPLMDLNPHLNLVIWASSVEITRVDAIFQPSLPGEFRYYPNIIAKGVGKIKQWN</sequence>
<dbReference type="EMBL" id="M16569">
    <property type="protein sequence ID" value="AAA46860.1"/>
    <property type="molecule type" value="Genomic_RNA"/>
</dbReference>
<dbReference type="EMBL" id="M16458">
    <property type="protein sequence ID" value="AAA46858.1"/>
    <property type="molecule type" value="Genomic_RNA"/>
</dbReference>
<dbReference type="EMBL" id="D00130">
    <property type="protein sequence ID" value="BAA00078.1"/>
    <property type="molecule type" value="mRNA"/>
</dbReference>
<dbReference type="EMBL" id="Y00119">
    <property type="protein sequence ID" value="CAA68302.1"/>
    <property type="molecule type" value="Genomic_RNA"/>
</dbReference>
<dbReference type="PIR" id="A26349">
    <property type="entry name" value="MFNZPT"/>
</dbReference>
<dbReference type="PIR" id="A27511">
    <property type="entry name" value="MFNZP3"/>
</dbReference>
<dbReference type="PIR" id="A29531">
    <property type="entry name" value="MFNZH3"/>
</dbReference>
<dbReference type="SMR" id="P07873"/>
<dbReference type="IntAct" id="P07873">
    <property type="interactions" value="2"/>
</dbReference>
<dbReference type="GO" id="GO:0019031">
    <property type="term" value="C:viral envelope"/>
    <property type="evidence" value="ECO:0007669"/>
    <property type="project" value="UniProtKB-KW"/>
</dbReference>
<dbReference type="GO" id="GO:0039660">
    <property type="term" value="F:structural constituent of virion"/>
    <property type="evidence" value="ECO:0007669"/>
    <property type="project" value="UniProtKB-KW"/>
</dbReference>
<dbReference type="GO" id="GO:0019068">
    <property type="term" value="P:virion assembly"/>
    <property type="evidence" value="ECO:0007669"/>
    <property type="project" value="InterPro"/>
</dbReference>
<dbReference type="Gene3D" id="2.70.20.60">
    <property type="entry name" value="Viral matrix protein, C-terminal domain"/>
    <property type="match status" value="1"/>
</dbReference>
<dbReference type="Gene3D" id="2.70.20.50">
    <property type="entry name" value="Viral matrix protein, N-terminal domain"/>
    <property type="match status" value="1"/>
</dbReference>
<dbReference type="InterPro" id="IPR042539">
    <property type="entry name" value="Matrix_C"/>
</dbReference>
<dbReference type="InterPro" id="IPR042540">
    <property type="entry name" value="Matrix_N"/>
</dbReference>
<dbReference type="InterPro" id="IPR055413">
    <property type="entry name" value="Matrix_Paramyxo_C"/>
</dbReference>
<dbReference type="InterPro" id="IPR000982">
    <property type="entry name" value="Matrix_Paramyxo_N"/>
</dbReference>
<dbReference type="Pfam" id="PF23765">
    <property type="entry name" value="Matrix_Paramyxo_C"/>
    <property type="match status" value="1"/>
</dbReference>
<dbReference type="Pfam" id="PF00661">
    <property type="entry name" value="Matrix_Paramyxo_N"/>
    <property type="match status" value="1"/>
</dbReference>
<feature type="chain" id="PRO_0000142766" description="Matrix protein">
    <location>
        <begin position="1"/>
        <end position="353"/>
    </location>
</feature>
<feature type="sequence conflict" description="In Ref. 3; BAA00078." evidence="1" ref="3">
    <original>S</original>
    <variation>N</variation>
    <location>
        <position position="80"/>
    </location>
</feature>
<feature type="sequence conflict" description="In Ref. 3; BAA00078." evidence="1" ref="3">
    <original>A</original>
    <variation>V</variation>
    <location>
        <position position="97"/>
    </location>
</feature>
<feature type="sequence conflict" description="In Ref. 3; BAA00078." evidence="1" ref="3">
    <original>D</original>
    <variation>I</variation>
    <location>
        <position position="103"/>
    </location>
</feature>
<feature type="sequence conflict" description="In Ref. 3; BAA00078." evidence="1" ref="3">
    <original>L</original>
    <variation>S</variation>
    <location>
        <position position="270"/>
    </location>
</feature>
<name>MATRX_PI3H4</name>
<organismHost>
    <name type="scientific">Homo sapiens</name>
    <name type="common">Human</name>
    <dbReference type="NCBI Taxonomy" id="9606"/>
</organismHost>
<accession>P07873</accession>
<organism>
    <name type="scientific">Human parainfluenza 3 virus (strain Wash/47885/57)</name>
    <name type="common">HPIV-3</name>
    <name type="synonym">Human parainfluenza 3 virus (strain NIH 47885)</name>
    <dbReference type="NCBI Taxonomy" id="11217"/>
    <lineage>
        <taxon>Viruses</taxon>
        <taxon>Riboviria</taxon>
        <taxon>Orthornavirae</taxon>
        <taxon>Negarnaviricota</taxon>
        <taxon>Haploviricotina</taxon>
        <taxon>Monjiviricetes</taxon>
        <taxon>Mononegavirales</taxon>
        <taxon>Paramyxoviridae</taxon>
        <taxon>Feraresvirinae</taxon>
        <taxon>Respirovirus</taxon>
        <taxon>Respirovirus pneumoniae</taxon>
    </lineage>
</organism>
<protein>
    <recommendedName>
        <fullName>Matrix protein</fullName>
    </recommendedName>
</protein>
<reference key="1">
    <citation type="journal article" date="1987" name="Virology">
        <title>Complete nucleotide sequence of the matrix protein mRNA and three intergenic junctions of human parainfluenza virus type 3.</title>
        <authorList>
            <person name="Luk D."/>
            <person name="Masters P.S."/>
            <person name="Sanchez A."/>
            <person name="Banerjee A.K."/>
        </authorList>
    </citation>
    <scope>NUCLEOTIDE SEQUENCE</scope>
</reference>
<reference key="2">
    <citation type="journal article" date="1987" name="Virology">
        <title>Molecular cloning and sequence analysis of the human parainfluenza 3 virus gene encoding the matrix protein.</title>
        <authorList>
            <person name="Galinski M.S."/>
            <person name="Mink M.A."/>
            <person name="Lambert D.M."/>
            <person name="Wechsler S.L."/>
            <person name="Pons M.W."/>
        </authorList>
    </citation>
    <scope>NUCLEOTIDE SEQUENCE</scope>
</reference>
<reference key="3">
    <citation type="journal article" date="1987" name="J. Gen. Virol.">
        <title>Sequence analysis of the matrix protein gene of human parainfluenza virus type 3: extensive sequence homology among paramyxoviruses.</title>
        <authorList>
            <person name="Spriggs M.K."/>
            <person name="Johnson P.R."/>
            <person name="Collins P.L."/>
        </authorList>
    </citation>
    <scope>NUCLEOTIDE SEQUENCE [MRNA]</scope>
</reference>
<reference key="4">
    <citation type="journal article" date="1987" name="Nucleic Acids Res.">
        <title>Nucleotide sequence of the human parainfluenza virus 3 matrix protein gene.</title>
        <authorList>
            <person name="Prinoski K."/>
            <person name="Cote M.J."/>
            <person name="Kang C.Y."/>
            <person name="Dimock K."/>
        </authorList>
    </citation>
    <scope>NUCLEOTIDE SEQUENCE</scope>
</reference>
<comment type="function">
    <text>The M protein has a crucial role in virus assembly and interacts with the RNP complex as well as with the viral membrane.</text>
</comment>
<comment type="subcellular location">
    <subcellularLocation>
        <location evidence="1">Virion</location>
    </subcellularLocation>
</comment>
<comment type="similarity">
    <text evidence="1">Belongs to the morbillivirus/respirovirus/rubulavirus M protein family.</text>
</comment>